<evidence type="ECO:0000255" key="1">
    <source>
        <dbReference type="HAMAP-Rule" id="MF_00451"/>
    </source>
</evidence>
<organism>
    <name type="scientific">Pseudomonas putida (strain W619)</name>
    <dbReference type="NCBI Taxonomy" id="390235"/>
    <lineage>
        <taxon>Bacteria</taxon>
        <taxon>Pseudomonadati</taxon>
        <taxon>Pseudomonadota</taxon>
        <taxon>Gammaproteobacteria</taxon>
        <taxon>Pseudomonadales</taxon>
        <taxon>Pseudomonadaceae</taxon>
        <taxon>Pseudomonas</taxon>
    </lineage>
</organism>
<sequence length="141" mass="15011">MAVQRTFSIIKPDAVAKNVIGKITTRFEEAGLKIVASKIKQLSKAEAEGFYAEHSERGFFGDLVAFMTSGPVVVQVLEGENAIALNRELMGATNPKEAAAGTIRADFAESIDANAVHGSDSEAAAAREIAYFFAATEVTTR</sequence>
<dbReference type="EC" id="2.7.4.6" evidence="1"/>
<dbReference type="EMBL" id="CP000949">
    <property type="protein sequence ID" value="ACA74809.1"/>
    <property type="molecule type" value="Genomic_DNA"/>
</dbReference>
<dbReference type="SMR" id="B1JDQ6"/>
<dbReference type="STRING" id="390235.PputW619_4329"/>
<dbReference type="KEGG" id="ppw:PputW619_4329"/>
<dbReference type="eggNOG" id="COG0105">
    <property type="taxonomic scope" value="Bacteria"/>
</dbReference>
<dbReference type="HOGENOM" id="CLU_060216_8_1_6"/>
<dbReference type="OrthoDB" id="9801161at2"/>
<dbReference type="GO" id="GO:0005737">
    <property type="term" value="C:cytoplasm"/>
    <property type="evidence" value="ECO:0007669"/>
    <property type="project" value="UniProtKB-SubCell"/>
</dbReference>
<dbReference type="GO" id="GO:0005524">
    <property type="term" value="F:ATP binding"/>
    <property type="evidence" value="ECO:0007669"/>
    <property type="project" value="UniProtKB-UniRule"/>
</dbReference>
<dbReference type="GO" id="GO:0046872">
    <property type="term" value="F:metal ion binding"/>
    <property type="evidence" value="ECO:0007669"/>
    <property type="project" value="UniProtKB-KW"/>
</dbReference>
<dbReference type="GO" id="GO:0004550">
    <property type="term" value="F:nucleoside diphosphate kinase activity"/>
    <property type="evidence" value="ECO:0007669"/>
    <property type="project" value="UniProtKB-UniRule"/>
</dbReference>
<dbReference type="GO" id="GO:0006241">
    <property type="term" value="P:CTP biosynthetic process"/>
    <property type="evidence" value="ECO:0007669"/>
    <property type="project" value="UniProtKB-UniRule"/>
</dbReference>
<dbReference type="GO" id="GO:0006183">
    <property type="term" value="P:GTP biosynthetic process"/>
    <property type="evidence" value="ECO:0007669"/>
    <property type="project" value="UniProtKB-UniRule"/>
</dbReference>
<dbReference type="GO" id="GO:0006228">
    <property type="term" value="P:UTP biosynthetic process"/>
    <property type="evidence" value="ECO:0007669"/>
    <property type="project" value="UniProtKB-UniRule"/>
</dbReference>
<dbReference type="CDD" id="cd04413">
    <property type="entry name" value="NDPk_I"/>
    <property type="match status" value="1"/>
</dbReference>
<dbReference type="FunFam" id="3.30.70.141:FF:000001">
    <property type="entry name" value="Nucleoside diphosphate kinase"/>
    <property type="match status" value="1"/>
</dbReference>
<dbReference type="Gene3D" id="3.30.70.141">
    <property type="entry name" value="Nucleoside diphosphate kinase-like domain"/>
    <property type="match status" value="1"/>
</dbReference>
<dbReference type="HAMAP" id="MF_00451">
    <property type="entry name" value="NDP_kinase"/>
    <property type="match status" value="1"/>
</dbReference>
<dbReference type="InterPro" id="IPR034907">
    <property type="entry name" value="NDK-like_dom"/>
</dbReference>
<dbReference type="InterPro" id="IPR036850">
    <property type="entry name" value="NDK-like_dom_sf"/>
</dbReference>
<dbReference type="InterPro" id="IPR001564">
    <property type="entry name" value="Nucleoside_diP_kinase"/>
</dbReference>
<dbReference type="InterPro" id="IPR023005">
    <property type="entry name" value="Nucleoside_diP_kinase_AS"/>
</dbReference>
<dbReference type="NCBIfam" id="NF001908">
    <property type="entry name" value="PRK00668.1"/>
    <property type="match status" value="1"/>
</dbReference>
<dbReference type="PANTHER" id="PTHR46161">
    <property type="entry name" value="NUCLEOSIDE DIPHOSPHATE KINASE"/>
    <property type="match status" value="1"/>
</dbReference>
<dbReference type="PANTHER" id="PTHR46161:SF3">
    <property type="entry name" value="NUCLEOSIDE DIPHOSPHATE KINASE DDB_G0292928-RELATED"/>
    <property type="match status" value="1"/>
</dbReference>
<dbReference type="Pfam" id="PF00334">
    <property type="entry name" value="NDK"/>
    <property type="match status" value="1"/>
</dbReference>
<dbReference type="PRINTS" id="PR01243">
    <property type="entry name" value="NUCDPKINASE"/>
</dbReference>
<dbReference type="SMART" id="SM00562">
    <property type="entry name" value="NDK"/>
    <property type="match status" value="1"/>
</dbReference>
<dbReference type="SUPFAM" id="SSF54919">
    <property type="entry name" value="Nucleoside diphosphate kinase, NDK"/>
    <property type="match status" value="1"/>
</dbReference>
<dbReference type="PROSITE" id="PS00469">
    <property type="entry name" value="NDPK"/>
    <property type="match status" value="1"/>
</dbReference>
<dbReference type="PROSITE" id="PS51374">
    <property type="entry name" value="NDPK_LIKE"/>
    <property type="match status" value="1"/>
</dbReference>
<reference key="1">
    <citation type="submission" date="2008-02" db="EMBL/GenBank/DDBJ databases">
        <title>Complete sequence of Pseudomonas putida W619.</title>
        <authorList>
            <person name="Copeland A."/>
            <person name="Lucas S."/>
            <person name="Lapidus A."/>
            <person name="Barry K."/>
            <person name="Detter J.C."/>
            <person name="Glavina del Rio T."/>
            <person name="Dalin E."/>
            <person name="Tice H."/>
            <person name="Pitluck S."/>
            <person name="Chain P."/>
            <person name="Malfatti S."/>
            <person name="Shin M."/>
            <person name="Vergez L."/>
            <person name="Schmutz J."/>
            <person name="Larimer F."/>
            <person name="Land M."/>
            <person name="Hauser L."/>
            <person name="Kyrpides N."/>
            <person name="Kim E."/>
            <person name="Taghavi S."/>
            <person name="Vangronsveld D."/>
            <person name="van der Lelie D."/>
            <person name="Richardson P."/>
        </authorList>
    </citation>
    <scope>NUCLEOTIDE SEQUENCE [LARGE SCALE GENOMIC DNA]</scope>
    <source>
        <strain>W619</strain>
    </source>
</reference>
<proteinExistence type="inferred from homology"/>
<keyword id="KW-0067">ATP-binding</keyword>
<keyword id="KW-0963">Cytoplasm</keyword>
<keyword id="KW-0418">Kinase</keyword>
<keyword id="KW-0460">Magnesium</keyword>
<keyword id="KW-0479">Metal-binding</keyword>
<keyword id="KW-0546">Nucleotide metabolism</keyword>
<keyword id="KW-0547">Nucleotide-binding</keyword>
<keyword id="KW-0597">Phosphoprotein</keyword>
<keyword id="KW-0808">Transferase</keyword>
<accession>B1JDQ6</accession>
<feature type="chain" id="PRO_1000125003" description="Nucleoside diphosphate kinase">
    <location>
        <begin position="1"/>
        <end position="141"/>
    </location>
</feature>
<feature type="active site" description="Pros-phosphohistidine intermediate" evidence="1">
    <location>
        <position position="117"/>
    </location>
</feature>
<feature type="binding site" evidence="1">
    <location>
        <position position="11"/>
    </location>
    <ligand>
        <name>ATP</name>
        <dbReference type="ChEBI" id="CHEBI:30616"/>
    </ligand>
</feature>
<feature type="binding site" evidence="1">
    <location>
        <position position="59"/>
    </location>
    <ligand>
        <name>ATP</name>
        <dbReference type="ChEBI" id="CHEBI:30616"/>
    </ligand>
</feature>
<feature type="binding site" evidence="1">
    <location>
        <position position="87"/>
    </location>
    <ligand>
        <name>ATP</name>
        <dbReference type="ChEBI" id="CHEBI:30616"/>
    </ligand>
</feature>
<feature type="binding site" evidence="1">
    <location>
        <position position="93"/>
    </location>
    <ligand>
        <name>ATP</name>
        <dbReference type="ChEBI" id="CHEBI:30616"/>
    </ligand>
</feature>
<feature type="binding site" evidence="1">
    <location>
        <position position="104"/>
    </location>
    <ligand>
        <name>ATP</name>
        <dbReference type="ChEBI" id="CHEBI:30616"/>
    </ligand>
</feature>
<feature type="binding site" evidence="1">
    <location>
        <position position="114"/>
    </location>
    <ligand>
        <name>ATP</name>
        <dbReference type="ChEBI" id="CHEBI:30616"/>
    </ligand>
</feature>
<name>NDK_PSEPW</name>
<comment type="function">
    <text evidence="1">Major role in the synthesis of nucleoside triphosphates other than ATP. The ATP gamma phosphate is transferred to the NDP beta phosphate via a ping-pong mechanism, using a phosphorylated active-site intermediate.</text>
</comment>
<comment type="catalytic activity">
    <reaction evidence="1">
        <text>a 2'-deoxyribonucleoside 5'-diphosphate + ATP = a 2'-deoxyribonucleoside 5'-triphosphate + ADP</text>
        <dbReference type="Rhea" id="RHEA:44640"/>
        <dbReference type="ChEBI" id="CHEBI:30616"/>
        <dbReference type="ChEBI" id="CHEBI:61560"/>
        <dbReference type="ChEBI" id="CHEBI:73316"/>
        <dbReference type="ChEBI" id="CHEBI:456216"/>
        <dbReference type="EC" id="2.7.4.6"/>
    </reaction>
</comment>
<comment type="catalytic activity">
    <reaction evidence="1">
        <text>a ribonucleoside 5'-diphosphate + ATP = a ribonucleoside 5'-triphosphate + ADP</text>
        <dbReference type="Rhea" id="RHEA:18113"/>
        <dbReference type="ChEBI" id="CHEBI:30616"/>
        <dbReference type="ChEBI" id="CHEBI:57930"/>
        <dbReference type="ChEBI" id="CHEBI:61557"/>
        <dbReference type="ChEBI" id="CHEBI:456216"/>
        <dbReference type="EC" id="2.7.4.6"/>
    </reaction>
</comment>
<comment type="cofactor">
    <cofactor evidence="1">
        <name>Mg(2+)</name>
        <dbReference type="ChEBI" id="CHEBI:18420"/>
    </cofactor>
</comment>
<comment type="subunit">
    <text evidence="1">Homotetramer.</text>
</comment>
<comment type="subcellular location">
    <subcellularLocation>
        <location evidence="1">Cytoplasm</location>
    </subcellularLocation>
</comment>
<comment type="similarity">
    <text evidence="1">Belongs to the NDK family.</text>
</comment>
<protein>
    <recommendedName>
        <fullName evidence="1">Nucleoside diphosphate kinase</fullName>
        <shortName evidence="1">NDK</shortName>
        <shortName evidence="1">NDP kinase</shortName>
        <ecNumber evidence="1">2.7.4.6</ecNumber>
    </recommendedName>
    <alternativeName>
        <fullName evidence="1">Nucleoside-2-P kinase</fullName>
    </alternativeName>
</protein>
<gene>
    <name evidence="1" type="primary">ndk</name>
    <name type="ordered locus">PputW619_4329</name>
</gene>